<name>FADA_ECO24</name>
<evidence type="ECO:0000255" key="1">
    <source>
        <dbReference type="HAMAP-Rule" id="MF_01620"/>
    </source>
</evidence>
<proteinExistence type="inferred from homology"/>
<keyword id="KW-0012">Acyltransferase</keyword>
<keyword id="KW-0963">Cytoplasm</keyword>
<keyword id="KW-0276">Fatty acid metabolism</keyword>
<keyword id="KW-0442">Lipid degradation</keyword>
<keyword id="KW-0443">Lipid metabolism</keyword>
<keyword id="KW-1185">Reference proteome</keyword>
<keyword id="KW-0808">Transferase</keyword>
<reference key="1">
    <citation type="journal article" date="2008" name="J. Bacteriol.">
        <title>The pangenome structure of Escherichia coli: comparative genomic analysis of E. coli commensal and pathogenic isolates.</title>
        <authorList>
            <person name="Rasko D.A."/>
            <person name="Rosovitz M.J."/>
            <person name="Myers G.S.A."/>
            <person name="Mongodin E.F."/>
            <person name="Fricke W.F."/>
            <person name="Gajer P."/>
            <person name="Crabtree J."/>
            <person name="Sebaihia M."/>
            <person name="Thomson N.R."/>
            <person name="Chaudhuri R."/>
            <person name="Henderson I.R."/>
            <person name="Sperandio V."/>
            <person name="Ravel J."/>
        </authorList>
    </citation>
    <scope>NUCLEOTIDE SEQUENCE [LARGE SCALE GENOMIC DNA]</scope>
    <source>
        <strain>E24377A / ETEC</strain>
    </source>
</reference>
<feature type="chain" id="PRO_0000323545" description="3-ketoacyl-CoA thiolase">
    <location>
        <begin position="1"/>
        <end position="387"/>
    </location>
</feature>
<feature type="active site" description="Acyl-thioester intermediate" evidence="1">
    <location>
        <position position="91"/>
    </location>
</feature>
<feature type="active site" description="Proton acceptor" evidence="1">
    <location>
        <position position="343"/>
    </location>
</feature>
<feature type="active site" description="Proton acceptor" evidence="1">
    <location>
        <position position="373"/>
    </location>
</feature>
<comment type="function">
    <text evidence="1">Catalyzes the final step of fatty acid oxidation in which acetyl-CoA is released and the CoA ester of a fatty acid two carbons shorter is formed.</text>
</comment>
<comment type="catalytic activity">
    <reaction evidence="1">
        <text>an acyl-CoA + acetyl-CoA = a 3-oxoacyl-CoA + CoA</text>
        <dbReference type="Rhea" id="RHEA:21564"/>
        <dbReference type="ChEBI" id="CHEBI:57287"/>
        <dbReference type="ChEBI" id="CHEBI:57288"/>
        <dbReference type="ChEBI" id="CHEBI:58342"/>
        <dbReference type="ChEBI" id="CHEBI:90726"/>
        <dbReference type="EC" id="2.3.1.16"/>
    </reaction>
</comment>
<comment type="pathway">
    <text evidence="1">Lipid metabolism; fatty acid beta-oxidation.</text>
</comment>
<comment type="subunit">
    <text evidence="1">Heterotetramer of two alpha chains (FadB) and two beta chains (FadA).</text>
</comment>
<comment type="subcellular location">
    <subcellularLocation>
        <location evidence="1">Cytoplasm</location>
    </subcellularLocation>
</comment>
<comment type="similarity">
    <text evidence="1">Belongs to the thiolase-like superfamily. Thiolase family.</text>
</comment>
<organism>
    <name type="scientific">Escherichia coli O139:H28 (strain E24377A / ETEC)</name>
    <dbReference type="NCBI Taxonomy" id="331111"/>
    <lineage>
        <taxon>Bacteria</taxon>
        <taxon>Pseudomonadati</taxon>
        <taxon>Pseudomonadota</taxon>
        <taxon>Gammaproteobacteria</taxon>
        <taxon>Enterobacterales</taxon>
        <taxon>Enterobacteriaceae</taxon>
        <taxon>Escherichia</taxon>
    </lineage>
</organism>
<accession>A7ZU50</accession>
<protein>
    <recommendedName>
        <fullName evidence="1">3-ketoacyl-CoA thiolase</fullName>
        <ecNumber evidence="1">2.3.1.16</ecNumber>
    </recommendedName>
    <alternativeName>
        <fullName evidence="1">Acetyl-CoA acyltransferase</fullName>
    </alternativeName>
    <alternativeName>
        <fullName evidence="1">Beta-ketothiolase</fullName>
    </alternativeName>
    <alternativeName>
        <fullName evidence="1">Fatty acid oxidation complex subunit beta</fullName>
    </alternativeName>
</protein>
<gene>
    <name evidence="1" type="primary">fadA</name>
    <name type="ordered locus">EcE24377A_4364</name>
</gene>
<dbReference type="EC" id="2.3.1.16" evidence="1"/>
<dbReference type="EMBL" id="CP000800">
    <property type="protein sequence ID" value="ABV20513.1"/>
    <property type="molecule type" value="Genomic_DNA"/>
</dbReference>
<dbReference type="RefSeq" id="WP_000438791.1">
    <property type="nucleotide sequence ID" value="NC_009801.1"/>
</dbReference>
<dbReference type="SMR" id="A7ZU50"/>
<dbReference type="GeneID" id="75204837"/>
<dbReference type="KEGG" id="ecw:EcE24377A_4364"/>
<dbReference type="HOGENOM" id="CLU_031026_2_3_6"/>
<dbReference type="UniPathway" id="UPA00659"/>
<dbReference type="Proteomes" id="UP000001122">
    <property type="component" value="Chromosome"/>
</dbReference>
<dbReference type="GO" id="GO:0005737">
    <property type="term" value="C:cytoplasm"/>
    <property type="evidence" value="ECO:0007669"/>
    <property type="project" value="UniProtKB-SubCell"/>
</dbReference>
<dbReference type="GO" id="GO:0003988">
    <property type="term" value="F:acetyl-CoA C-acyltransferase activity"/>
    <property type="evidence" value="ECO:0007669"/>
    <property type="project" value="UniProtKB-UniRule"/>
</dbReference>
<dbReference type="GO" id="GO:0006635">
    <property type="term" value="P:fatty acid beta-oxidation"/>
    <property type="evidence" value="ECO:0007669"/>
    <property type="project" value="UniProtKB-UniRule"/>
</dbReference>
<dbReference type="GO" id="GO:0010124">
    <property type="term" value="P:phenylacetate catabolic process"/>
    <property type="evidence" value="ECO:0007669"/>
    <property type="project" value="TreeGrafter"/>
</dbReference>
<dbReference type="CDD" id="cd00751">
    <property type="entry name" value="thiolase"/>
    <property type="match status" value="1"/>
</dbReference>
<dbReference type="FunFam" id="3.40.47.10:FF:000010">
    <property type="entry name" value="Acetyl-CoA acetyltransferase (Thiolase)"/>
    <property type="match status" value="1"/>
</dbReference>
<dbReference type="Gene3D" id="3.40.47.10">
    <property type="match status" value="2"/>
</dbReference>
<dbReference type="HAMAP" id="MF_01620">
    <property type="entry name" value="FadA"/>
    <property type="match status" value="1"/>
</dbReference>
<dbReference type="InterPro" id="IPR012805">
    <property type="entry name" value="FadA"/>
</dbReference>
<dbReference type="InterPro" id="IPR002155">
    <property type="entry name" value="Thiolase"/>
</dbReference>
<dbReference type="InterPro" id="IPR016039">
    <property type="entry name" value="Thiolase-like"/>
</dbReference>
<dbReference type="InterPro" id="IPR050215">
    <property type="entry name" value="Thiolase-like_sf_Thiolase"/>
</dbReference>
<dbReference type="InterPro" id="IPR020615">
    <property type="entry name" value="Thiolase_acyl_enz_int_AS"/>
</dbReference>
<dbReference type="InterPro" id="IPR020610">
    <property type="entry name" value="Thiolase_AS"/>
</dbReference>
<dbReference type="InterPro" id="IPR020617">
    <property type="entry name" value="Thiolase_C"/>
</dbReference>
<dbReference type="InterPro" id="IPR020613">
    <property type="entry name" value="Thiolase_CS"/>
</dbReference>
<dbReference type="InterPro" id="IPR020616">
    <property type="entry name" value="Thiolase_N"/>
</dbReference>
<dbReference type="NCBIfam" id="TIGR01930">
    <property type="entry name" value="AcCoA-C-Actrans"/>
    <property type="match status" value="1"/>
</dbReference>
<dbReference type="NCBIfam" id="TIGR02445">
    <property type="entry name" value="fadA"/>
    <property type="match status" value="1"/>
</dbReference>
<dbReference type="NCBIfam" id="NF006510">
    <property type="entry name" value="PRK08947.1"/>
    <property type="match status" value="1"/>
</dbReference>
<dbReference type="PANTHER" id="PTHR43853:SF11">
    <property type="entry name" value="3-KETOACYL-COA THIOLASE FADA"/>
    <property type="match status" value="1"/>
</dbReference>
<dbReference type="PANTHER" id="PTHR43853">
    <property type="entry name" value="3-KETOACYL-COA THIOLASE, PEROXISOMAL"/>
    <property type="match status" value="1"/>
</dbReference>
<dbReference type="Pfam" id="PF02803">
    <property type="entry name" value="Thiolase_C"/>
    <property type="match status" value="1"/>
</dbReference>
<dbReference type="Pfam" id="PF00108">
    <property type="entry name" value="Thiolase_N"/>
    <property type="match status" value="1"/>
</dbReference>
<dbReference type="PIRSF" id="PIRSF000429">
    <property type="entry name" value="Ac-CoA_Ac_transf"/>
    <property type="match status" value="1"/>
</dbReference>
<dbReference type="SUPFAM" id="SSF53901">
    <property type="entry name" value="Thiolase-like"/>
    <property type="match status" value="2"/>
</dbReference>
<dbReference type="PROSITE" id="PS00098">
    <property type="entry name" value="THIOLASE_1"/>
    <property type="match status" value="1"/>
</dbReference>
<dbReference type="PROSITE" id="PS00737">
    <property type="entry name" value="THIOLASE_2"/>
    <property type="match status" value="1"/>
</dbReference>
<dbReference type="PROSITE" id="PS00099">
    <property type="entry name" value="THIOLASE_3"/>
    <property type="match status" value="1"/>
</dbReference>
<sequence>MEQVVIVDAIRTPMSRSKGGAFRNVRAEDLSAHLMRSLLARNPALEAAALDDIYWGCVQQTLEQGFNIARNAALLAEVPHSVPAVTVNRLCGSSMQALHDAARMIMSGDAQACLVGGVEHMGHVPMSHGVDFHPGLSRNVAKAAGMMGLTAEMLARMHGISREMQDAFAARSHARAWAATQSGAFKNEIIPTGGHDADGVLKQFNYDEVIRPETTVEALATLRPAFDPVSGTVTAGTSSALSDGAAAMLVMSESRAHELGLKPRARVRSMAVVGCDPAIMGYGPVPASKLALKKAGLSVSDIGVFEMNEAFAAQILPCIKDLGLIEQIDEKINLNGGAIALGHPLGCSGARISTTLLNLMERKDVQFGLATMCIGLGQGIATVFERV</sequence>